<reference key="1">
    <citation type="journal article" date="2009" name="Nature">
        <title>Genome sequence and analysis of the Irish potato famine pathogen Phytophthora infestans.</title>
        <authorList>
            <consortium name="The Broad Institute Genome Sequencing Platform"/>
            <person name="Haas B.J."/>
            <person name="Kamoun S."/>
            <person name="Zody M.C."/>
            <person name="Jiang R.H."/>
            <person name="Handsaker R.E."/>
            <person name="Cano L.M."/>
            <person name="Grabherr M."/>
            <person name="Kodira C.D."/>
            <person name="Raffaele S."/>
            <person name="Torto-Alalibo T."/>
            <person name="Bozkurt T.O."/>
            <person name="Ah-Fong A.M."/>
            <person name="Alvarado L."/>
            <person name="Anderson V.L."/>
            <person name="Armstrong M.R."/>
            <person name="Avrova A."/>
            <person name="Baxter L."/>
            <person name="Beynon J."/>
            <person name="Boevink P.C."/>
            <person name="Bollmann S.R."/>
            <person name="Bos J.I."/>
            <person name="Bulone V."/>
            <person name="Cai G."/>
            <person name="Cakir C."/>
            <person name="Carrington J.C."/>
            <person name="Chawner M."/>
            <person name="Conti L."/>
            <person name="Costanzo S."/>
            <person name="Ewan R."/>
            <person name="Fahlgren N."/>
            <person name="Fischbach M.A."/>
            <person name="Fugelstad J."/>
            <person name="Gilroy E.M."/>
            <person name="Gnerre S."/>
            <person name="Green P.J."/>
            <person name="Grenville-Briggs L.J."/>
            <person name="Griffith J."/>
            <person name="Grunwald N.J."/>
            <person name="Horn K."/>
            <person name="Horner N.R."/>
            <person name="Hu C.H."/>
            <person name="Huitema E."/>
            <person name="Jeong D.H."/>
            <person name="Jones A.M."/>
            <person name="Jones J.D."/>
            <person name="Jones R.W."/>
            <person name="Karlsson E.K."/>
            <person name="Kunjeti S.G."/>
            <person name="Lamour K."/>
            <person name="Liu Z."/>
            <person name="Ma L."/>
            <person name="Maclean D."/>
            <person name="Chibucos M.C."/>
            <person name="McDonald H."/>
            <person name="McWalters J."/>
            <person name="Meijer H.J."/>
            <person name="Morgan W."/>
            <person name="Morris P.F."/>
            <person name="Munro C.A."/>
            <person name="O'Neill K."/>
            <person name="Ospina-Giraldo M."/>
            <person name="Pinzon A."/>
            <person name="Pritchard L."/>
            <person name="Ramsahoye B."/>
            <person name="Ren Q."/>
            <person name="Restrepo S."/>
            <person name="Roy S."/>
            <person name="Sadanandom A."/>
            <person name="Savidor A."/>
            <person name="Schornack S."/>
            <person name="Schwartz D.C."/>
            <person name="Schumann U.D."/>
            <person name="Schwessinger B."/>
            <person name="Seyer L."/>
            <person name="Sharpe T."/>
            <person name="Silvar C."/>
            <person name="Song J."/>
            <person name="Studholme D.J."/>
            <person name="Sykes S."/>
            <person name="Thines M."/>
            <person name="van de Vondervoort P.J."/>
            <person name="Phuntumart V."/>
            <person name="Wawra S."/>
            <person name="Weide R."/>
            <person name="Win J."/>
            <person name="Young C."/>
            <person name="Zhou S."/>
            <person name="Fry W."/>
            <person name="Meyers B.C."/>
            <person name="van West P."/>
            <person name="Ristaino J."/>
            <person name="Govers F."/>
            <person name="Birch P.R."/>
            <person name="Whisson S.C."/>
            <person name="Judelson H.S."/>
            <person name="Nusbaum C."/>
        </authorList>
    </citation>
    <scope>NUCLEOTIDE SEQUENCE [LARGE SCALE GENOMIC DNA]</scope>
    <source>
        <strain>T30-4</strain>
    </source>
</reference>
<dbReference type="EC" id="2.8.1.8" evidence="1"/>
<dbReference type="EMBL" id="DS028150">
    <property type="protein sequence ID" value="EEY62412.1"/>
    <property type="molecule type" value="Genomic_DNA"/>
</dbReference>
<dbReference type="RefSeq" id="XP_002899048.1">
    <property type="nucleotide sequence ID" value="XM_002899002.1"/>
</dbReference>
<dbReference type="SMR" id="D0NP70"/>
<dbReference type="FunCoup" id="D0NP70">
    <property type="interactions" value="275"/>
</dbReference>
<dbReference type="STRING" id="403677.D0NP70"/>
<dbReference type="EnsemblProtists" id="PITG_14852T0">
    <property type="protein sequence ID" value="PITG_14852T0"/>
    <property type="gene ID" value="PITG_14852"/>
</dbReference>
<dbReference type="GeneID" id="9467967"/>
<dbReference type="KEGG" id="pif:PITG_14852"/>
<dbReference type="VEuPathDB" id="FungiDB:PITG_14852"/>
<dbReference type="eggNOG" id="KOG2672">
    <property type="taxonomic scope" value="Eukaryota"/>
</dbReference>
<dbReference type="HOGENOM" id="CLU_033144_2_0_1"/>
<dbReference type="InParanoid" id="D0NP70"/>
<dbReference type="OMA" id="PYCDIDF"/>
<dbReference type="OrthoDB" id="3231at2759"/>
<dbReference type="UniPathway" id="UPA00538">
    <property type="reaction ID" value="UER00593"/>
</dbReference>
<dbReference type="Proteomes" id="UP000006643">
    <property type="component" value="Partially assembled WGS sequence"/>
</dbReference>
<dbReference type="GO" id="GO:0005739">
    <property type="term" value="C:mitochondrion"/>
    <property type="evidence" value="ECO:0007669"/>
    <property type="project" value="UniProtKB-SubCell"/>
</dbReference>
<dbReference type="GO" id="GO:0051539">
    <property type="term" value="F:4 iron, 4 sulfur cluster binding"/>
    <property type="evidence" value="ECO:0007669"/>
    <property type="project" value="UniProtKB-UniRule"/>
</dbReference>
<dbReference type="GO" id="GO:0016992">
    <property type="term" value="F:lipoate synthase activity"/>
    <property type="evidence" value="ECO:0007669"/>
    <property type="project" value="UniProtKB-UniRule"/>
</dbReference>
<dbReference type="GO" id="GO:0046872">
    <property type="term" value="F:metal ion binding"/>
    <property type="evidence" value="ECO:0007669"/>
    <property type="project" value="UniProtKB-KW"/>
</dbReference>
<dbReference type="CDD" id="cd01335">
    <property type="entry name" value="Radical_SAM"/>
    <property type="match status" value="1"/>
</dbReference>
<dbReference type="FunFam" id="3.20.20.70:FF:000248">
    <property type="entry name" value="Lipoyl synthase, mitochondrial"/>
    <property type="match status" value="1"/>
</dbReference>
<dbReference type="Gene3D" id="3.20.20.70">
    <property type="entry name" value="Aldolase class I"/>
    <property type="match status" value="1"/>
</dbReference>
<dbReference type="HAMAP" id="MF_00206">
    <property type="entry name" value="Lipoyl_synth"/>
    <property type="match status" value="1"/>
</dbReference>
<dbReference type="InterPro" id="IPR013785">
    <property type="entry name" value="Aldolase_TIM"/>
</dbReference>
<dbReference type="InterPro" id="IPR006638">
    <property type="entry name" value="Elp3/MiaA/NifB-like_rSAM"/>
</dbReference>
<dbReference type="InterPro" id="IPR031691">
    <property type="entry name" value="LIAS_N"/>
</dbReference>
<dbReference type="InterPro" id="IPR003698">
    <property type="entry name" value="Lipoyl_synth"/>
</dbReference>
<dbReference type="InterPro" id="IPR007197">
    <property type="entry name" value="rSAM"/>
</dbReference>
<dbReference type="NCBIfam" id="TIGR00510">
    <property type="entry name" value="lipA"/>
    <property type="match status" value="1"/>
</dbReference>
<dbReference type="NCBIfam" id="NF004019">
    <property type="entry name" value="PRK05481.1"/>
    <property type="match status" value="1"/>
</dbReference>
<dbReference type="NCBIfam" id="NF009544">
    <property type="entry name" value="PRK12928.1"/>
    <property type="match status" value="1"/>
</dbReference>
<dbReference type="PANTHER" id="PTHR10949">
    <property type="entry name" value="LIPOYL SYNTHASE"/>
    <property type="match status" value="1"/>
</dbReference>
<dbReference type="PANTHER" id="PTHR10949:SF0">
    <property type="entry name" value="LIPOYL SYNTHASE, MITOCHONDRIAL"/>
    <property type="match status" value="1"/>
</dbReference>
<dbReference type="Pfam" id="PF16881">
    <property type="entry name" value="LIAS_N"/>
    <property type="match status" value="1"/>
</dbReference>
<dbReference type="Pfam" id="PF04055">
    <property type="entry name" value="Radical_SAM"/>
    <property type="match status" value="1"/>
</dbReference>
<dbReference type="PIRSF" id="PIRSF005963">
    <property type="entry name" value="Lipoyl_synth"/>
    <property type="match status" value="1"/>
</dbReference>
<dbReference type="SFLD" id="SFLDF00271">
    <property type="entry name" value="lipoyl_synthase"/>
    <property type="match status" value="1"/>
</dbReference>
<dbReference type="SFLD" id="SFLDG01058">
    <property type="entry name" value="lipoyl_synthase_like"/>
    <property type="match status" value="1"/>
</dbReference>
<dbReference type="SMART" id="SM00729">
    <property type="entry name" value="Elp3"/>
    <property type="match status" value="1"/>
</dbReference>
<dbReference type="SUPFAM" id="SSF102114">
    <property type="entry name" value="Radical SAM enzymes"/>
    <property type="match status" value="1"/>
</dbReference>
<dbReference type="PROSITE" id="PS51918">
    <property type="entry name" value="RADICAL_SAM"/>
    <property type="match status" value="1"/>
</dbReference>
<keyword id="KW-0004">4Fe-4S</keyword>
<keyword id="KW-0408">Iron</keyword>
<keyword id="KW-0411">Iron-sulfur</keyword>
<keyword id="KW-0479">Metal-binding</keyword>
<keyword id="KW-0496">Mitochondrion</keyword>
<keyword id="KW-1185">Reference proteome</keyword>
<keyword id="KW-0949">S-adenosyl-L-methionine</keyword>
<keyword id="KW-0808">Transferase</keyword>
<keyword id="KW-0809">Transit peptide</keyword>
<gene>
    <name type="ORF">PITG_14852</name>
</gene>
<comment type="function">
    <text evidence="1">Catalyzes the radical-mediated insertion of two sulfur atoms into the C-6 and C-8 positions of the octanoyl moiety bound to the lipoyl domains of lipoate-dependent enzymes, thereby converting the octanoylated domains into lipoylated derivatives.</text>
</comment>
<comment type="catalytic activity">
    <reaction evidence="1">
        <text>[[Fe-S] cluster scaffold protein carrying a second [4Fe-4S](2+) cluster] + N(6)-octanoyl-L-lysyl-[protein] + 2 oxidized [2Fe-2S]-[ferredoxin] + 2 S-adenosyl-L-methionine + 4 H(+) = [[Fe-S] cluster scaffold protein] + N(6)-[(R)-dihydrolipoyl]-L-lysyl-[protein] + 4 Fe(3+) + 2 hydrogen sulfide + 2 5'-deoxyadenosine + 2 L-methionine + 2 reduced [2Fe-2S]-[ferredoxin]</text>
        <dbReference type="Rhea" id="RHEA:16585"/>
        <dbReference type="Rhea" id="RHEA-COMP:9928"/>
        <dbReference type="Rhea" id="RHEA-COMP:10000"/>
        <dbReference type="Rhea" id="RHEA-COMP:10001"/>
        <dbReference type="Rhea" id="RHEA-COMP:10475"/>
        <dbReference type="Rhea" id="RHEA-COMP:14568"/>
        <dbReference type="Rhea" id="RHEA-COMP:14569"/>
        <dbReference type="ChEBI" id="CHEBI:15378"/>
        <dbReference type="ChEBI" id="CHEBI:17319"/>
        <dbReference type="ChEBI" id="CHEBI:29034"/>
        <dbReference type="ChEBI" id="CHEBI:29919"/>
        <dbReference type="ChEBI" id="CHEBI:33722"/>
        <dbReference type="ChEBI" id="CHEBI:33737"/>
        <dbReference type="ChEBI" id="CHEBI:33738"/>
        <dbReference type="ChEBI" id="CHEBI:57844"/>
        <dbReference type="ChEBI" id="CHEBI:59789"/>
        <dbReference type="ChEBI" id="CHEBI:78809"/>
        <dbReference type="ChEBI" id="CHEBI:83100"/>
        <dbReference type="EC" id="2.8.1.8"/>
    </reaction>
</comment>
<comment type="cofactor">
    <cofactor evidence="1">
        <name>[4Fe-4S] cluster</name>
        <dbReference type="ChEBI" id="CHEBI:49883"/>
    </cofactor>
    <text evidence="1">Binds 2 [4Fe-4S] clusters per subunit. One cluster is coordinated with 3 cysteines and an exchangeable S-adenosyl-L-methionine.</text>
</comment>
<comment type="pathway">
    <text evidence="1">Protein modification; protein lipoylation via endogenous pathway; protein N(6)-(lipoyl)lysine from octanoyl-[acyl-carrier-protein]: step 2/2.</text>
</comment>
<comment type="subcellular location">
    <subcellularLocation>
        <location evidence="1">Mitochondrion</location>
    </subcellularLocation>
</comment>
<comment type="similarity">
    <text evidence="1">Belongs to the radical SAM superfamily. Lipoyl synthase family.</text>
</comment>
<name>LIPA_PHYIT</name>
<protein>
    <recommendedName>
        <fullName evidence="1">Lipoyl synthase, mitochondrial</fullName>
        <ecNumber evidence="1">2.8.1.8</ecNumber>
    </recommendedName>
    <alternativeName>
        <fullName evidence="1">Lipoate synthase</fullName>
        <shortName evidence="1">LS</shortName>
        <shortName evidence="1">Lip-syn</shortName>
    </alternativeName>
    <alternativeName>
        <fullName evidence="1">Lipoic acid synthase</fullName>
    </alternativeName>
</protein>
<proteinExistence type="inferred from homology"/>
<accession>D0NP70</accession>
<feature type="transit peptide" description="Mitochondrion" evidence="1">
    <location>
        <begin position="1"/>
        <end position="19"/>
    </location>
</feature>
<feature type="chain" id="PRO_0000398245" description="Lipoyl synthase, mitochondrial">
    <location>
        <begin position="20"/>
        <end position="383"/>
    </location>
</feature>
<feature type="domain" description="Radical SAM core" evidence="2">
    <location>
        <begin position="132"/>
        <end position="351"/>
    </location>
</feature>
<feature type="region of interest" description="Disordered" evidence="3">
    <location>
        <begin position="69"/>
        <end position="97"/>
    </location>
</feature>
<feature type="binding site" evidence="1">
    <location>
        <position position="116"/>
    </location>
    <ligand>
        <name>[4Fe-4S] cluster</name>
        <dbReference type="ChEBI" id="CHEBI:49883"/>
        <label>1</label>
    </ligand>
</feature>
<feature type="binding site" evidence="1">
    <location>
        <position position="121"/>
    </location>
    <ligand>
        <name>[4Fe-4S] cluster</name>
        <dbReference type="ChEBI" id="CHEBI:49883"/>
        <label>1</label>
    </ligand>
</feature>
<feature type="binding site" evidence="1">
    <location>
        <position position="127"/>
    </location>
    <ligand>
        <name>[4Fe-4S] cluster</name>
        <dbReference type="ChEBI" id="CHEBI:49883"/>
        <label>1</label>
    </ligand>
</feature>
<feature type="binding site" evidence="1">
    <location>
        <position position="147"/>
    </location>
    <ligand>
        <name>[4Fe-4S] cluster</name>
        <dbReference type="ChEBI" id="CHEBI:49883"/>
        <label>2</label>
        <note>4Fe-4S-S-AdoMet</note>
    </ligand>
</feature>
<feature type="binding site" evidence="1">
    <location>
        <position position="151"/>
    </location>
    <ligand>
        <name>[4Fe-4S] cluster</name>
        <dbReference type="ChEBI" id="CHEBI:49883"/>
        <label>2</label>
        <note>4Fe-4S-S-AdoMet</note>
    </ligand>
</feature>
<feature type="binding site" evidence="1">
    <location>
        <position position="154"/>
    </location>
    <ligand>
        <name>[4Fe-4S] cluster</name>
        <dbReference type="ChEBI" id="CHEBI:49883"/>
        <label>2</label>
        <note>4Fe-4S-S-AdoMet</note>
    </ligand>
</feature>
<feature type="binding site" evidence="1">
    <location>
        <position position="362"/>
    </location>
    <ligand>
        <name>[4Fe-4S] cluster</name>
        <dbReference type="ChEBI" id="CHEBI:49883"/>
        <label>1</label>
    </ligand>
</feature>
<sequence>MHASTLTRCMRVAQNARCLSTAAASVQVTHSERGARLAALRERLAEETRQGPTFAEQALSLEDFAFEADAAPGTKPSRKPNASNRKPKWLKAQPTQGANYERLRKSVKSLGLSTVCEEAKCPNIGECWGGGKDGIATATIMLMGDTCTRGCSFCAVKTSRKPKPLDIEEPNKVAEAIAAWGLDYIVFTSVDRDDYEDLGAGHFAKTVSTLRAKLPEILIECLTPDFQGHDNLIDQVATSGLDVFAHNMETVERLQRRVRDYRANYKQSLHVLERAKVAAPHLVTKTSLMLGVGERNEDLFQTLRDLRNSGVDVVTFGQYLRPSTKHMPVKSYVTPEAFAEWQKVAEQMGFLYVASGPMVRSSYKAGEFFMKNLLKNRKTQVVA</sequence>
<organism>
    <name type="scientific">Phytophthora infestans (strain T30-4)</name>
    <name type="common">Potato late blight agent</name>
    <dbReference type="NCBI Taxonomy" id="403677"/>
    <lineage>
        <taxon>Eukaryota</taxon>
        <taxon>Sar</taxon>
        <taxon>Stramenopiles</taxon>
        <taxon>Oomycota</taxon>
        <taxon>Peronosporales</taxon>
        <taxon>Peronosporaceae</taxon>
        <taxon>Phytophthora</taxon>
    </lineage>
</organism>
<evidence type="ECO:0000255" key="1">
    <source>
        <dbReference type="HAMAP-Rule" id="MF_03123"/>
    </source>
</evidence>
<evidence type="ECO:0000255" key="2">
    <source>
        <dbReference type="PROSITE-ProRule" id="PRU01266"/>
    </source>
</evidence>
<evidence type="ECO:0000256" key="3">
    <source>
        <dbReference type="SAM" id="MobiDB-lite"/>
    </source>
</evidence>